<keyword id="KW-0002">3D-structure</keyword>
<keyword id="KW-0053">Apoptosis</keyword>
<keyword id="KW-0244">Early protein</keyword>
<keyword id="KW-0325">Glycoprotein</keyword>
<keyword id="KW-1043">Host membrane</keyword>
<keyword id="KW-1045">Host mitochondrion</keyword>
<keyword id="KW-0945">Host-virus interaction</keyword>
<keyword id="KW-1081">Inhibition of host apoptosis by viral BCL2-like protein</keyword>
<keyword id="KW-1083">Inhibition of host autophagy by virus</keyword>
<keyword id="KW-0472">Membrane</keyword>
<keyword id="KW-1119">Modulation of host cell apoptosis by virus</keyword>
<keyword id="KW-0812">Transmembrane</keyword>
<keyword id="KW-1133">Transmembrane helix</keyword>
<proteinExistence type="evidence at protein level"/>
<organism>
    <name type="scientific">Epstein-Barr virus (strain GD1)</name>
    <name type="common">HHV-4</name>
    <name type="synonym">Human gammaherpesvirus 4</name>
    <dbReference type="NCBI Taxonomy" id="10376"/>
    <lineage>
        <taxon>Viruses</taxon>
        <taxon>Duplodnaviria</taxon>
        <taxon>Heunggongvirae</taxon>
        <taxon>Peploviricota</taxon>
        <taxon>Herviviricetes</taxon>
        <taxon>Herpesvirales</taxon>
        <taxon>Orthoherpesviridae</taxon>
        <taxon>Gammaherpesvirinae</taxon>
        <taxon>Lymphocryptovirus</taxon>
        <taxon>Lymphocryptovirus humangamma4</taxon>
    </lineage>
</organism>
<gene>
    <name type="ORF">BHRF1</name>
</gene>
<sequence length="191" mass="21879">MAYSTREILLALCIRDSRVHGNGTLHPVLELAARETPLRLSPEDTVVLRYHVLLEEIIERNSETFTETWNRFITHTEHVDLDFNSVFVEIFHRGDPSLGRALAWMAWCMHACRTLCCNQSTPYYVVDLSVRGMLEASEGLDGWIHQQGGWSTLIEDNIPGSRRFSWTLFLAGLTLSLLVICSYLFISRGRH</sequence>
<organismHost>
    <name type="scientific">Homo sapiens</name>
    <name type="common">Human</name>
    <dbReference type="NCBI Taxonomy" id="9606"/>
</organismHost>
<accession>P0C736</accession>
<feature type="chain" id="PRO_0000375929" description="Apoptosis regulator BHRF1">
    <location>
        <begin position="1"/>
        <end position="191"/>
    </location>
</feature>
<feature type="transmembrane region" description="Helical" evidence="3">
    <location>
        <begin position="166"/>
        <end position="186"/>
    </location>
</feature>
<feature type="region of interest" description="Interaction with host VRK2" evidence="1">
    <location>
        <begin position="1"/>
        <end position="18"/>
    </location>
</feature>
<feature type="region of interest" description="Interaction with host VRK2" evidence="1">
    <location>
        <begin position="89"/>
        <end position="142"/>
    </location>
</feature>
<feature type="short sequence motif" description="BH1">
    <location>
        <begin position="89"/>
        <end position="109"/>
    </location>
</feature>
<feature type="short sequence motif" description="BH2">
    <location>
        <begin position="142"/>
        <end position="157"/>
    </location>
</feature>
<feature type="glycosylation site" description="N-linked (GlcNAc...) asparagine; by host" evidence="3">
    <location>
        <position position="22"/>
    </location>
</feature>
<feature type="glycosylation site" description="N-linked (GlcNAc...) asparagine; by host" evidence="3">
    <location>
        <position position="118"/>
    </location>
</feature>
<feature type="helix" evidence="5">
    <location>
        <begin position="5"/>
        <end position="18"/>
    </location>
</feature>
<feature type="helix" evidence="5">
    <location>
        <begin position="27"/>
        <end position="35"/>
    </location>
</feature>
<feature type="helix" evidence="5">
    <location>
        <begin position="45"/>
        <end position="60"/>
    </location>
</feature>
<feature type="helix" evidence="5">
    <location>
        <begin position="62"/>
        <end position="75"/>
    </location>
</feature>
<feature type="helix" evidence="5">
    <location>
        <begin position="79"/>
        <end position="91"/>
    </location>
</feature>
<feature type="strand" evidence="5">
    <location>
        <begin position="92"/>
        <end position="94"/>
    </location>
</feature>
<feature type="helix" evidence="5">
    <location>
        <begin position="98"/>
        <end position="117"/>
    </location>
</feature>
<feature type="helix" evidence="5">
    <location>
        <begin position="123"/>
        <end position="137"/>
    </location>
</feature>
<feature type="helix" evidence="5">
    <location>
        <begin position="138"/>
        <end position="140"/>
    </location>
</feature>
<feature type="helix" evidence="5">
    <location>
        <begin position="141"/>
        <end position="146"/>
    </location>
</feature>
<feature type="helix" evidence="5">
    <location>
        <begin position="150"/>
        <end position="155"/>
    </location>
</feature>
<protein>
    <recommendedName>
        <fullName>Apoptosis regulator BHRF1</fullName>
    </recommendedName>
    <alternativeName>
        <fullName>Early antigen protein R</fullName>
        <shortName>EA-R</shortName>
    </alternativeName>
    <alternativeName>
        <fullName>Nuclear antigen</fullName>
    </alternativeName>
</protein>
<evidence type="ECO:0000250" key="1"/>
<evidence type="ECO:0000250" key="2">
    <source>
        <dbReference type="UniProtKB" id="P03182"/>
    </source>
</evidence>
<evidence type="ECO:0000255" key="3"/>
<evidence type="ECO:0000305" key="4"/>
<evidence type="ECO:0007829" key="5">
    <source>
        <dbReference type="PDB" id="2V6Q"/>
    </source>
</evidence>
<name>EAR_EBVG</name>
<dbReference type="EMBL" id="AY961628">
    <property type="status" value="NOT_ANNOTATED_CDS"/>
    <property type="molecule type" value="Genomic_DNA"/>
</dbReference>
<dbReference type="PDB" id="2V6Q">
    <property type="method" value="X-ray"/>
    <property type="resolution" value="2.70 A"/>
    <property type="chains" value="A=1-160"/>
</dbReference>
<dbReference type="PDBsum" id="2V6Q"/>
<dbReference type="BMRB" id="P0C736"/>
<dbReference type="SMR" id="P0C736"/>
<dbReference type="IntAct" id="P0C736">
    <property type="interactions" value="14"/>
</dbReference>
<dbReference type="MINT" id="P0C736"/>
<dbReference type="EvolutionaryTrace" id="P0C736"/>
<dbReference type="Proteomes" id="UP000007641">
    <property type="component" value="Genome"/>
</dbReference>
<dbReference type="GO" id="GO:0033644">
    <property type="term" value="C:host cell membrane"/>
    <property type="evidence" value="ECO:0007669"/>
    <property type="project" value="UniProtKB-SubCell"/>
</dbReference>
<dbReference type="GO" id="GO:0033650">
    <property type="term" value="C:host cell mitochondrion"/>
    <property type="evidence" value="ECO:0007669"/>
    <property type="project" value="UniProtKB-SubCell"/>
</dbReference>
<dbReference type="GO" id="GO:0016020">
    <property type="term" value="C:membrane"/>
    <property type="evidence" value="ECO:0007669"/>
    <property type="project" value="UniProtKB-KW"/>
</dbReference>
<dbReference type="GO" id="GO:0042981">
    <property type="term" value="P:regulation of apoptotic process"/>
    <property type="evidence" value="ECO:0007669"/>
    <property type="project" value="InterPro"/>
</dbReference>
<dbReference type="GO" id="GO:0033668">
    <property type="term" value="P:symbiont-mediated suppression of host apoptosis"/>
    <property type="evidence" value="ECO:0007669"/>
    <property type="project" value="UniProtKB-KW"/>
</dbReference>
<dbReference type="GO" id="GO:0140321">
    <property type="term" value="P:symbiont-mediated suppression of host autophagy"/>
    <property type="evidence" value="ECO:0007669"/>
    <property type="project" value="UniProtKB-KW"/>
</dbReference>
<dbReference type="Gene3D" id="1.10.437.10">
    <property type="entry name" value="Blc2-like"/>
    <property type="match status" value="1"/>
</dbReference>
<dbReference type="InterPro" id="IPR036834">
    <property type="entry name" value="Bcl-2-like_sf"/>
</dbReference>
<dbReference type="InterPro" id="IPR046371">
    <property type="entry name" value="Bcl-2_BH1-3"/>
</dbReference>
<dbReference type="InterPro" id="IPR002475">
    <property type="entry name" value="Bcl2-like"/>
</dbReference>
<dbReference type="InterPro" id="IPR020726">
    <property type="entry name" value="Bcl2_BH2_motif_CS"/>
</dbReference>
<dbReference type="Pfam" id="PF00452">
    <property type="entry name" value="Bcl-2"/>
    <property type="match status" value="1"/>
</dbReference>
<dbReference type="SUPFAM" id="SSF56854">
    <property type="entry name" value="Bcl-2 inhibitors of programmed cell death"/>
    <property type="match status" value="1"/>
</dbReference>
<dbReference type="PROSITE" id="PS50062">
    <property type="entry name" value="BCL2_FAMILY"/>
    <property type="match status" value="1"/>
</dbReference>
<dbReference type="PROSITE" id="PS01258">
    <property type="entry name" value="BH2"/>
    <property type="match status" value="1"/>
</dbReference>
<reference key="1">
    <citation type="journal article" date="2005" name="J. Virol.">
        <title>Genomic sequence analysis of Epstein-Barr virus strain GD1 from a nasopharyngeal carcinoma patient.</title>
        <authorList>
            <person name="Zeng M.-S."/>
            <person name="Li D.-J."/>
            <person name="Liu Q.-L."/>
            <person name="Song L.-B."/>
            <person name="Li M.-Z."/>
            <person name="Zhang R.-H."/>
            <person name="Yu X.-J."/>
            <person name="Wang H.-M."/>
            <person name="Ernberg I."/>
            <person name="Zeng Y.-X."/>
        </authorList>
    </citation>
    <scope>NUCLEOTIDE SEQUENCE [LARGE SCALE GENOMIC DNA]</scope>
</reference>
<comment type="function">
    <text evidence="2">Prevents premature death of the host cell during virus production, which would otherwise reduce the amount of progeny virus. Acts as a host B-cell leukemia/lymphoma 2 (Bcl-2) homolog, and interacts with pro-apoptotic proteins to prevent mitochondria permeabilization, release of cytochrome c and subsequent apoptosis of the host cell. In addition, plays a role in the inhibiton of host BECN1-mediated starvation-induced autophagy without affecting basal levels of autophagy.</text>
</comment>
<comment type="subunit">
    <text evidence="2">Interacts with isoform 1 of host VRK2; this interaction is involved in protecting cells from apoptosis. Interacts with host PRA1; this interaction seems to modulate BHRF1 anti-apoptotic activity. Interacts with host BCL2L11. Interacts with host BAD and BBC3. Interacts with BALF1; BALF1 acting as a negative regulator of the survival function of BHRF1. Interacts with host BECN1.</text>
</comment>
<comment type="subcellular location">
    <subcellularLocation>
        <location evidence="2">Host membrane</location>
        <topology evidence="2">Single-pass membrane protein</topology>
    </subcellularLocation>
    <subcellularLocation>
        <location evidence="2">Host mitochondrion</location>
    </subcellularLocation>
    <text evidence="2">also observed in the perinuclear region of the cell.</text>
</comment>
<comment type="miscellaneous">
    <text>EA-R is part of the restricted EA-complex.</text>
</comment>
<comment type="similarity">
    <text evidence="4">Belongs to the Bcl-2 family.</text>
</comment>